<sequence>MARKSLIQREKKRQALERKYHLIRQSLEEKSKVSSLDDKWEIHRKLQSSPRNSAPTRLHRRCSSTGRPRANYRDFGLSGHILREMAHACLLPGIKKSSW</sequence>
<geneLocation type="chloroplast"/>
<gene>
    <name evidence="1" type="primary">rps14</name>
</gene>
<feature type="chain" id="PRO_0000130983" description="Small ribosomal subunit protein uS14c">
    <location>
        <begin position="1"/>
        <end position="99"/>
    </location>
</feature>
<feature type="region of interest" description="Disordered" evidence="2">
    <location>
        <begin position="46"/>
        <end position="66"/>
    </location>
</feature>
<name>RR14_PINTH</name>
<reference key="1">
    <citation type="journal article" date="1994" name="Proc. Natl. Acad. Sci. U.S.A.">
        <title>Loss of all ndh genes as determined by sequencing the entire chloroplast genome of the black pine Pinus thunbergii.</title>
        <authorList>
            <person name="Wakasugi T."/>
            <person name="Tsudzuki J."/>
            <person name="Ito S."/>
            <person name="Nakashima K."/>
            <person name="Tsudzuki T."/>
            <person name="Sugiura M."/>
        </authorList>
    </citation>
    <scope>NUCLEOTIDE SEQUENCE [LARGE SCALE GENOMIC DNA]</scope>
</reference>
<comment type="function">
    <text evidence="1">Binds 16S rRNA, required for the assembly of 30S particles.</text>
</comment>
<comment type="subunit">
    <text evidence="1">Part of the 30S ribosomal subunit.</text>
</comment>
<comment type="subcellular location">
    <subcellularLocation>
        <location>Plastid</location>
        <location>Chloroplast</location>
    </subcellularLocation>
</comment>
<comment type="similarity">
    <text evidence="1">Belongs to the universal ribosomal protein uS14 family.</text>
</comment>
<accession>P41641</accession>
<evidence type="ECO:0000255" key="1">
    <source>
        <dbReference type="HAMAP-Rule" id="MF_00537"/>
    </source>
</evidence>
<evidence type="ECO:0000256" key="2">
    <source>
        <dbReference type="SAM" id="MobiDB-lite"/>
    </source>
</evidence>
<evidence type="ECO:0000305" key="3"/>
<organism>
    <name type="scientific">Pinus thunbergii</name>
    <name type="common">Japanese black pine</name>
    <name type="synonym">Pinus thunbergiana</name>
    <dbReference type="NCBI Taxonomy" id="3350"/>
    <lineage>
        <taxon>Eukaryota</taxon>
        <taxon>Viridiplantae</taxon>
        <taxon>Streptophyta</taxon>
        <taxon>Embryophyta</taxon>
        <taxon>Tracheophyta</taxon>
        <taxon>Spermatophyta</taxon>
        <taxon>Pinopsida</taxon>
        <taxon>Pinidae</taxon>
        <taxon>Conifers I</taxon>
        <taxon>Pinales</taxon>
        <taxon>Pinaceae</taxon>
        <taxon>Pinus</taxon>
        <taxon>Pinus subgen. Pinus</taxon>
    </lineage>
</organism>
<keyword id="KW-0150">Chloroplast</keyword>
<keyword id="KW-0934">Plastid</keyword>
<keyword id="KW-0687">Ribonucleoprotein</keyword>
<keyword id="KW-0689">Ribosomal protein</keyword>
<keyword id="KW-0694">RNA-binding</keyword>
<keyword id="KW-0699">rRNA-binding</keyword>
<proteinExistence type="inferred from homology"/>
<dbReference type="EMBL" id="D17510">
    <property type="protein sequence ID" value="BAA04421.1"/>
    <property type="molecule type" value="Genomic_DNA"/>
</dbReference>
<dbReference type="PIR" id="T07545">
    <property type="entry name" value="T07545"/>
</dbReference>
<dbReference type="RefSeq" id="NP_042466.1">
    <property type="nucleotide sequence ID" value="NC_001631.1"/>
</dbReference>
<dbReference type="SMR" id="P41641"/>
<dbReference type="GeneID" id="809057"/>
<dbReference type="GO" id="GO:0009507">
    <property type="term" value="C:chloroplast"/>
    <property type="evidence" value="ECO:0007669"/>
    <property type="project" value="UniProtKB-SubCell"/>
</dbReference>
<dbReference type="GO" id="GO:0015935">
    <property type="term" value="C:small ribosomal subunit"/>
    <property type="evidence" value="ECO:0007669"/>
    <property type="project" value="TreeGrafter"/>
</dbReference>
<dbReference type="GO" id="GO:0019843">
    <property type="term" value="F:rRNA binding"/>
    <property type="evidence" value="ECO:0007669"/>
    <property type="project" value="UniProtKB-UniRule"/>
</dbReference>
<dbReference type="GO" id="GO:0003735">
    <property type="term" value="F:structural constituent of ribosome"/>
    <property type="evidence" value="ECO:0007669"/>
    <property type="project" value="InterPro"/>
</dbReference>
<dbReference type="GO" id="GO:0006412">
    <property type="term" value="P:translation"/>
    <property type="evidence" value="ECO:0007669"/>
    <property type="project" value="UniProtKB-UniRule"/>
</dbReference>
<dbReference type="FunFam" id="1.10.287.1480:FF:000001">
    <property type="entry name" value="30S ribosomal protein S14"/>
    <property type="match status" value="1"/>
</dbReference>
<dbReference type="Gene3D" id="1.10.287.1480">
    <property type="match status" value="1"/>
</dbReference>
<dbReference type="HAMAP" id="MF_00537">
    <property type="entry name" value="Ribosomal_uS14_1"/>
    <property type="match status" value="1"/>
</dbReference>
<dbReference type="InterPro" id="IPR001209">
    <property type="entry name" value="Ribosomal_uS14"/>
</dbReference>
<dbReference type="InterPro" id="IPR023036">
    <property type="entry name" value="Ribosomal_uS14_bac/plastid"/>
</dbReference>
<dbReference type="InterPro" id="IPR018271">
    <property type="entry name" value="Ribosomal_uS14_CS"/>
</dbReference>
<dbReference type="NCBIfam" id="NF006477">
    <property type="entry name" value="PRK08881.1"/>
    <property type="match status" value="1"/>
</dbReference>
<dbReference type="PANTHER" id="PTHR19836">
    <property type="entry name" value="30S RIBOSOMAL PROTEIN S14"/>
    <property type="match status" value="1"/>
</dbReference>
<dbReference type="PANTHER" id="PTHR19836:SF19">
    <property type="entry name" value="SMALL RIBOSOMAL SUBUNIT PROTEIN US14M"/>
    <property type="match status" value="1"/>
</dbReference>
<dbReference type="Pfam" id="PF00253">
    <property type="entry name" value="Ribosomal_S14"/>
    <property type="match status" value="1"/>
</dbReference>
<dbReference type="SUPFAM" id="SSF57716">
    <property type="entry name" value="Glucocorticoid receptor-like (DNA-binding domain)"/>
    <property type="match status" value="1"/>
</dbReference>
<dbReference type="PROSITE" id="PS00527">
    <property type="entry name" value="RIBOSOMAL_S14"/>
    <property type="match status" value="1"/>
</dbReference>
<protein>
    <recommendedName>
        <fullName evidence="1">Small ribosomal subunit protein uS14c</fullName>
    </recommendedName>
    <alternativeName>
        <fullName evidence="3">30S ribosomal protein S14, chloroplastic</fullName>
    </alternativeName>
</protein>